<keyword id="KW-0963">Cytoplasm</keyword>
<keyword id="KW-0251">Elongation factor</keyword>
<keyword id="KW-0342">GTP-binding</keyword>
<keyword id="KW-0547">Nucleotide-binding</keyword>
<keyword id="KW-0648">Protein biosynthesis</keyword>
<keyword id="KW-1185">Reference proteome</keyword>
<reference key="1">
    <citation type="journal article" date="2004" name="Nat. Biotechnol.">
        <title>The genome sequence of the anaerobic, sulfate-reducing bacterium Desulfovibrio vulgaris Hildenborough.</title>
        <authorList>
            <person name="Heidelberg J.F."/>
            <person name="Seshadri R."/>
            <person name="Haveman S.A."/>
            <person name="Hemme C.L."/>
            <person name="Paulsen I.T."/>
            <person name="Kolonay J.F."/>
            <person name="Eisen J.A."/>
            <person name="Ward N.L."/>
            <person name="Methe B.A."/>
            <person name="Brinkac L.M."/>
            <person name="Daugherty S.C."/>
            <person name="DeBoy R.T."/>
            <person name="Dodson R.J."/>
            <person name="Durkin A.S."/>
            <person name="Madupu R."/>
            <person name="Nelson W.C."/>
            <person name="Sullivan S.A."/>
            <person name="Fouts D.E."/>
            <person name="Haft D.H."/>
            <person name="Selengut J."/>
            <person name="Peterson J.D."/>
            <person name="Davidsen T.M."/>
            <person name="Zafar N."/>
            <person name="Zhou L."/>
            <person name="Radune D."/>
            <person name="Dimitrov G."/>
            <person name="Hance M."/>
            <person name="Tran K."/>
            <person name="Khouri H.M."/>
            <person name="Gill J."/>
            <person name="Utterback T.R."/>
            <person name="Feldblyum T.V."/>
            <person name="Wall J.D."/>
            <person name="Voordouw G."/>
            <person name="Fraser C.M."/>
        </authorList>
    </citation>
    <scope>NUCLEOTIDE SEQUENCE [LARGE SCALE GENOMIC DNA]</scope>
    <source>
        <strain>ATCC 29579 / DSM 644 / CCUG 34227 / NCIMB 8303 / VKM B-1760 / Hildenborough</strain>
    </source>
</reference>
<feature type="chain" id="PRO_0000091118" description="Elongation factor G">
    <location>
        <begin position="1"/>
        <end position="691"/>
    </location>
</feature>
<feature type="domain" description="tr-type G">
    <location>
        <begin position="8"/>
        <end position="283"/>
    </location>
</feature>
<feature type="binding site" evidence="1">
    <location>
        <begin position="17"/>
        <end position="24"/>
    </location>
    <ligand>
        <name>GTP</name>
        <dbReference type="ChEBI" id="CHEBI:37565"/>
    </ligand>
</feature>
<feature type="binding site" evidence="1">
    <location>
        <begin position="81"/>
        <end position="85"/>
    </location>
    <ligand>
        <name>GTP</name>
        <dbReference type="ChEBI" id="CHEBI:37565"/>
    </ligand>
</feature>
<feature type="binding site" evidence="1">
    <location>
        <begin position="135"/>
        <end position="138"/>
    </location>
    <ligand>
        <name>GTP</name>
        <dbReference type="ChEBI" id="CHEBI:37565"/>
    </ligand>
</feature>
<name>EFG_NITV2</name>
<accession>Q72CI3</accession>
<gene>
    <name evidence="1" type="primary">fusA</name>
    <name type="ordered locus">DVU_1300</name>
</gene>
<evidence type="ECO:0000255" key="1">
    <source>
        <dbReference type="HAMAP-Rule" id="MF_00054"/>
    </source>
</evidence>
<organism>
    <name type="scientific">Nitratidesulfovibrio vulgaris (strain ATCC 29579 / DSM 644 / CCUG 34227 / NCIMB 8303 / VKM B-1760 / Hildenborough)</name>
    <name type="common">Desulfovibrio vulgaris</name>
    <dbReference type="NCBI Taxonomy" id="882"/>
    <lineage>
        <taxon>Bacteria</taxon>
        <taxon>Pseudomonadati</taxon>
        <taxon>Thermodesulfobacteriota</taxon>
        <taxon>Desulfovibrionia</taxon>
        <taxon>Desulfovibrionales</taxon>
        <taxon>Desulfovibrionaceae</taxon>
        <taxon>Nitratidesulfovibrio</taxon>
    </lineage>
</organism>
<comment type="function">
    <text evidence="1">Catalyzes the GTP-dependent ribosomal translocation step during translation elongation. During this step, the ribosome changes from the pre-translocational (PRE) to the post-translocational (POST) state as the newly formed A-site-bound peptidyl-tRNA and P-site-bound deacylated tRNA move to the P and E sites, respectively. Catalyzes the coordinated movement of the two tRNA molecules, the mRNA and conformational changes in the ribosome.</text>
</comment>
<comment type="subcellular location">
    <subcellularLocation>
        <location evidence="1">Cytoplasm</location>
    </subcellularLocation>
</comment>
<comment type="similarity">
    <text evidence="1">Belongs to the TRAFAC class translation factor GTPase superfamily. Classic translation factor GTPase family. EF-G/EF-2 subfamily.</text>
</comment>
<proteinExistence type="inferred from homology"/>
<protein>
    <recommendedName>
        <fullName evidence="1">Elongation factor G</fullName>
        <shortName evidence="1">EF-G</shortName>
    </recommendedName>
</protein>
<dbReference type="EMBL" id="AE017285">
    <property type="protein sequence ID" value="AAS95778.1"/>
    <property type="molecule type" value="Genomic_DNA"/>
</dbReference>
<dbReference type="RefSeq" id="WP_010938595.1">
    <property type="nucleotide sequence ID" value="NC_002937.3"/>
</dbReference>
<dbReference type="RefSeq" id="YP_010519.1">
    <property type="nucleotide sequence ID" value="NC_002937.3"/>
</dbReference>
<dbReference type="SMR" id="Q72CI3"/>
<dbReference type="STRING" id="882.DVU_1300"/>
<dbReference type="PaxDb" id="882-DVU_1300"/>
<dbReference type="EnsemblBacteria" id="AAS95778">
    <property type="protein sequence ID" value="AAS95778"/>
    <property type="gene ID" value="DVU_1300"/>
</dbReference>
<dbReference type="KEGG" id="dvu:DVU_1300"/>
<dbReference type="PATRIC" id="fig|882.5.peg.1212"/>
<dbReference type="eggNOG" id="COG0480">
    <property type="taxonomic scope" value="Bacteria"/>
</dbReference>
<dbReference type="HOGENOM" id="CLU_002794_4_1_7"/>
<dbReference type="OrthoDB" id="9801472at2"/>
<dbReference type="PhylomeDB" id="Q72CI3"/>
<dbReference type="Proteomes" id="UP000002194">
    <property type="component" value="Chromosome"/>
</dbReference>
<dbReference type="GO" id="GO:0005737">
    <property type="term" value="C:cytoplasm"/>
    <property type="evidence" value="ECO:0007669"/>
    <property type="project" value="UniProtKB-SubCell"/>
</dbReference>
<dbReference type="GO" id="GO:0005525">
    <property type="term" value="F:GTP binding"/>
    <property type="evidence" value="ECO:0007669"/>
    <property type="project" value="UniProtKB-UniRule"/>
</dbReference>
<dbReference type="GO" id="GO:0003924">
    <property type="term" value="F:GTPase activity"/>
    <property type="evidence" value="ECO:0007669"/>
    <property type="project" value="InterPro"/>
</dbReference>
<dbReference type="GO" id="GO:0003746">
    <property type="term" value="F:translation elongation factor activity"/>
    <property type="evidence" value="ECO:0007669"/>
    <property type="project" value="UniProtKB-UniRule"/>
</dbReference>
<dbReference type="GO" id="GO:0032790">
    <property type="term" value="P:ribosome disassembly"/>
    <property type="evidence" value="ECO:0007669"/>
    <property type="project" value="TreeGrafter"/>
</dbReference>
<dbReference type="CDD" id="cd01886">
    <property type="entry name" value="EF-G"/>
    <property type="match status" value="1"/>
</dbReference>
<dbReference type="CDD" id="cd16262">
    <property type="entry name" value="EFG_III"/>
    <property type="match status" value="1"/>
</dbReference>
<dbReference type="CDD" id="cd01434">
    <property type="entry name" value="EFG_mtEFG1_IV"/>
    <property type="match status" value="1"/>
</dbReference>
<dbReference type="CDD" id="cd03713">
    <property type="entry name" value="EFG_mtEFG_C"/>
    <property type="match status" value="1"/>
</dbReference>
<dbReference type="CDD" id="cd04088">
    <property type="entry name" value="EFG_mtEFG_II"/>
    <property type="match status" value="1"/>
</dbReference>
<dbReference type="FunFam" id="2.40.30.10:FF:000006">
    <property type="entry name" value="Elongation factor G"/>
    <property type="match status" value="1"/>
</dbReference>
<dbReference type="FunFam" id="3.30.230.10:FF:000003">
    <property type="entry name" value="Elongation factor G"/>
    <property type="match status" value="1"/>
</dbReference>
<dbReference type="FunFam" id="3.30.70.240:FF:000001">
    <property type="entry name" value="Elongation factor G"/>
    <property type="match status" value="1"/>
</dbReference>
<dbReference type="FunFam" id="3.30.70.870:FF:000001">
    <property type="entry name" value="Elongation factor G"/>
    <property type="match status" value="1"/>
</dbReference>
<dbReference type="FunFam" id="3.40.50.300:FF:000029">
    <property type="entry name" value="Elongation factor G"/>
    <property type="match status" value="1"/>
</dbReference>
<dbReference type="Gene3D" id="3.30.230.10">
    <property type="match status" value="1"/>
</dbReference>
<dbReference type="Gene3D" id="3.30.70.240">
    <property type="match status" value="1"/>
</dbReference>
<dbReference type="Gene3D" id="3.30.70.870">
    <property type="entry name" value="Elongation Factor G (Translational Gtpase), domain 3"/>
    <property type="match status" value="1"/>
</dbReference>
<dbReference type="Gene3D" id="3.40.50.300">
    <property type="entry name" value="P-loop containing nucleotide triphosphate hydrolases"/>
    <property type="match status" value="1"/>
</dbReference>
<dbReference type="Gene3D" id="2.40.30.10">
    <property type="entry name" value="Translation factors"/>
    <property type="match status" value="1"/>
</dbReference>
<dbReference type="HAMAP" id="MF_00054_B">
    <property type="entry name" value="EF_G_EF_2_B"/>
    <property type="match status" value="1"/>
</dbReference>
<dbReference type="InterPro" id="IPR053905">
    <property type="entry name" value="EF-G-like_DII"/>
</dbReference>
<dbReference type="InterPro" id="IPR041095">
    <property type="entry name" value="EFG_II"/>
</dbReference>
<dbReference type="InterPro" id="IPR009022">
    <property type="entry name" value="EFG_III"/>
</dbReference>
<dbReference type="InterPro" id="IPR035647">
    <property type="entry name" value="EFG_III/V"/>
</dbReference>
<dbReference type="InterPro" id="IPR047872">
    <property type="entry name" value="EFG_IV"/>
</dbReference>
<dbReference type="InterPro" id="IPR035649">
    <property type="entry name" value="EFG_V"/>
</dbReference>
<dbReference type="InterPro" id="IPR000640">
    <property type="entry name" value="EFG_V-like"/>
</dbReference>
<dbReference type="InterPro" id="IPR031157">
    <property type="entry name" value="G_TR_CS"/>
</dbReference>
<dbReference type="InterPro" id="IPR027417">
    <property type="entry name" value="P-loop_NTPase"/>
</dbReference>
<dbReference type="InterPro" id="IPR020568">
    <property type="entry name" value="Ribosomal_Su5_D2-typ_SF"/>
</dbReference>
<dbReference type="InterPro" id="IPR014721">
    <property type="entry name" value="Ribsml_uS5_D2-typ_fold_subgr"/>
</dbReference>
<dbReference type="InterPro" id="IPR005225">
    <property type="entry name" value="Small_GTP-bd"/>
</dbReference>
<dbReference type="InterPro" id="IPR000795">
    <property type="entry name" value="T_Tr_GTP-bd_dom"/>
</dbReference>
<dbReference type="InterPro" id="IPR009000">
    <property type="entry name" value="Transl_B-barrel_sf"/>
</dbReference>
<dbReference type="InterPro" id="IPR004540">
    <property type="entry name" value="Transl_elong_EFG/EF2"/>
</dbReference>
<dbReference type="InterPro" id="IPR005517">
    <property type="entry name" value="Transl_elong_EFG/EF2_IV"/>
</dbReference>
<dbReference type="NCBIfam" id="TIGR00484">
    <property type="entry name" value="EF-G"/>
    <property type="match status" value="1"/>
</dbReference>
<dbReference type="NCBIfam" id="NF009379">
    <property type="entry name" value="PRK12740.1-3"/>
    <property type="match status" value="1"/>
</dbReference>
<dbReference type="NCBIfam" id="NF009381">
    <property type="entry name" value="PRK12740.1-5"/>
    <property type="match status" value="1"/>
</dbReference>
<dbReference type="NCBIfam" id="TIGR00231">
    <property type="entry name" value="small_GTP"/>
    <property type="match status" value="1"/>
</dbReference>
<dbReference type="PANTHER" id="PTHR43261:SF1">
    <property type="entry name" value="RIBOSOME-RELEASING FACTOR 2, MITOCHONDRIAL"/>
    <property type="match status" value="1"/>
</dbReference>
<dbReference type="PANTHER" id="PTHR43261">
    <property type="entry name" value="TRANSLATION ELONGATION FACTOR G-RELATED"/>
    <property type="match status" value="1"/>
</dbReference>
<dbReference type="Pfam" id="PF22042">
    <property type="entry name" value="EF-G_D2"/>
    <property type="match status" value="1"/>
</dbReference>
<dbReference type="Pfam" id="PF00679">
    <property type="entry name" value="EFG_C"/>
    <property type="match status" value="1"/>
</dbReference>
<dbReference type="Pfam" id="PF14492">
    <property type="entry name" value="EFG_III"/>
    <property type="match status" value="1"/>
</dbReference>
<dbReference type="Pfam" id="PF03764">
    <property type="entry name" value="EFG_IV"/>
    <property type="match status" value="1"/>
</dbReference>
<dbReference type="Pfam" id="PF00009">
    <property type="entry name" value="GTP_EFTU"/>
    <property type="match status" value="1"/>
</dbReference>
<dbReference type="PRINTS" id="PR00315">
    <property type="entry name" value="ELONGATNFCT"/>
</dbReference>
<dbReference type="SMART" id="SM00838">
    <property type="entry name" value="EFG_C"/>
    <property type="match status" value="1"/>
</dbReference>
<dbReference type="SMART" id="SM00889">
    <property type="entry name" value="EFG_IV"/>
    <property type="match status" value="1"/>
</dbReference>
<dbReference type="SUPFAM" id="SSF54980">
    <property type="entry name" value="EF-G C-terminal domain-like"/>
    <property type="match status" value="2"/>
</dbReference>
<dbReference type="SUPFAM" id="SSF52540">
    <property type="entry name" value="P-loop containing nucleoside triphosphate hydrolases"/>
    <property type="match status" value="1"/>
</dbReference>
<dbReference type="SUPFAM" id="SSF54211">
    <property type="entry name" value="Ribosomal protein S5 domain 2-like"/>
    <property type="match status" value="1"/>
</dbReference>
<dbReference type="SUPFAM" id="SSF50447">
    <property type="entry name" value="Translation proteins"/>
    <property type="match status" value="1"/>
</dbReference>
<dbReference type="PROSITE" id="PS00301">
    <property type="entry name" value="G_TR_1"/>
    <property type="match status" value="1"/>
</dbReference>
<dbReference type="PROSITE" id="PS51722">
    <property type="entry name" value="G_TR_2"/>
    <property type="match status" value="1"/>
</dbReference>
<sequence length="691" mass="76010">MARVVPIDMQRNIGIMAHIDAGKTTTTERILFYTGVSHKIGEVHDGAATMDWMEQEQERGITITSAATTCFWREHRVNIIDTPGHVDFTIEVERSLRVLDGAVCVFDAVAGVEPQSETVWRQADRYGVPRICFVNKMDRIGASFERCVGMIRDRLRAKPIPVQLPIGAEDRFEGVIDLITGKAVTFDKASKGQTFNVGDVPAEYRDQYDAMRFEMIEAVAEEDEALMEKYLGGEELTVEEIISCVRKATIARNIVPVLCGSAFRNMGVQPLLDAVVDFLPSPVDIEQMKGVNPDKEEETIVCPCDDKEPLAALVFKLFSDPYIGHLSFCRIYSGFIESGMTVLNANTGKRERVGRLLKMHANKREEIKWAGAGDIVALVGLKLASTGDTICDEKRPVVLESLDIPEPVIEVAIEPKTKADRDALSAALAKLAKEDPSFRVKGDDETNQTLIAGMGELHLEIIVDRLTREFSVNANVGKPQVAYRETITKPGKADTKHVKQSGGRGQYGHAVIEIEPNPGKGYEFVNSITGGVIPKEYIAPIDKGIQDALKSGILSGFPTVDIKVNLVFGSYHDVDSSEQAFYVTGSMAIKEAIAKSGPVLLEPIMDVEVVTPDEYLGDVMGDLNGRRGKVQSMEARVGAQSIRAQVPLSEMFGYATDLRSKTQGRATFSMQFHHYERVPAALAEELVKKKG</sequence>